<keyword id="KW-0067">ATP-binding</keyword>
<keyword id="KW-0963">Cytoplasm</keyword>
<keyword id="KW-0418">Kinase</keyword>
<keyword id="KW-0520">NAD</keyword>
<keyword id="KW-0521">NADP</keyword>
<keyword id="KW-0547">Nucleotide-binding</keyword>
<keyword id="KW-0808">Transferase</keyword>
<protein>
    <recommendedName>
        <fullName evidence="1">NAD kinase</fullName>
        <ecNumber evidence="1">2.7.1.23</ecNumber>
    </recommendedName>
    <alternativeName>
        <fullName evidence="1">ATP-dependent NAD kinase</fullName>
    </alternativeName>
</protein>
<name>NADK_SACI4</name>
<dbReference type="EC" id="2.7.1.23" evidence="1"/>
<dbReference type="EMBL" id="CP001400">
    <property type="protein sequence ID" value="ACP36927.1"/>
    <property type="molecule type" value="Genomic_DNA"/>
</dbReference>
<dbReference type="RefSeq" id="WP_012710214.1">
    <property type="nucleotide sequence ID" value="NC_012588.1"/>
</dbReference>
<dbReference type="SMR" id="C3MTP3"/>
<dbReference type="KEGG" id="sia:M1425_0035"/>
<dbReference type="HOGENOM" id="CLU_008831_0_3_2"/>
<dbReference type="Proteomes" id="UP000001350">
    <property type="component" value="Chromosome"/>
</dbReference>
<dbReference type="GO" id="GO:0005737">
    <property type="term" value="C:cytoplasm"/>
    <property type="evidence" value="ECO:0007669"/>
    <property type="project" value="UniProtKB-SubCell"/>
</dbReference>
<dbReference type="GO" id="GO:0005524">
    <property type="term" value="F:ATP binding"/>
    <property type="evidence" value="ECO:0007669"/>
    <property type="project" value="UniProtKB-KW"/>
</dbReference>
<dbReference type="GO" id="GO:0046872">
    <property type="term" value="F:metal ion binding"/>
    <property type="evidence" value="ECO:0007669"/>
    <property type="project" value="UniProtKB-UniRule"/>
</dbReference>
<dbReference type="GO" id="GO:0003951">
    <property type="term" value="F:NAD+ kinase activity"/>
    <property type="evidence" value="ECO:0007669"/>
    <property type="project" value="UniProtKB-UniRule"/>
</dbReference>
<dbReference type="GO" id="GO:0019674">
    <property type="term" value="P:NAD metabolic process"/>
    <property type="evidence" value="ECO:0007669"/>
    <property type="project" value="InterPro"/>
</dbReference>
<dbReference type="GO" id="GO:0006741">
    <property type="term" value="P:NADP biosynthetic process"/>
    <property type="evidence" value="ECO:0007669"/>
    <property type="project" value="UniProtKB-UniRule"/>
</dbReference>
<dbReference type="Gene3D" id="3.40.50.10330">
    <property type="entry name" value="Probable inorganic polyphosphate/atp-NAD kinase, domain 1"/>
    <property type="match status" value="1"/>
</dbReference>
<dbReference type="Gene3D" id="2.60.200.30">
    <property type="entry name" value="Probable inorganic polyphosphate/atp-NAD kinase, domain 2"/>
    <property type="match status" value="1"/>
</dbReference>
<dbReference type="HAMAP" id="MF_00361">
    <property type="entry name" value="NAD_kinase"/>
    <property type="match status" value="1"/>
</dbReference>
<dbReference type="InterPro" id="IPR017438">
    <property type="entry name" value="ATP-NAD_kinase_N"/>
</dbReference>
<dbReference type="InterPro" id="IPR017437">
    <property type="entry name" value="ATP-NAD_kinase_PpnK-typ_C"/>
</dbReference>
<dbReference type="InterPro" id="IPR016064">
    <property type="entry name" value="NAD/diacylglycerol_kinase_sf"/>
</dbReference>
<dbReference type="InterPro" id="IPR002504">
    <property type="entry name" value="NADK"/>
</dbReference>
<dbReference type="PANTHER" id="PTHR20275:SF43">
    <property type="entry name" value="BIFUNCTIONAL NADP PHOSPHATASE_NAD KINASE"/>
    <property type="match status" value="1"/>
</dbReference>
<dbReference type="PANTHER" id="PTHR20275">
    <property type="entry name" value="NAD KINASE"/>
    <property type="match status" value="1"/>
</dbReference>
<dbReference type="Pfam" id="PF01513">
    <property type="entry name" value="NAD_kinase"/>
    <property type="match status" value="1"/>
</dbReference>
<dbReference type="Pfam" id="PF20143">
    <property type="entry name" value="NAD_kinase_C"/>
    <property type="match status" value="1"/>
</dbReference>
<dbReference type="SUPFAM" id="SSF111331">
    <property type="entry name" value="NAD kinase/diacylglycerol kinase-like"/>
    <property type="match status" value="1"/>
</dbReference>
<sequence length="249" mass="27978">MRVKIVSKPTSQLNNIIEKIKNISTKLGFEVVDKDFDYVIAVGGDGTLLRAVKQNKPVIAVKAGRRGLLMDVPVDKFEEALLRLKKGDYEEEEYMLLEMIYNDKVELGFNEVGILYDRPEAIKVGISFDTERVSVEGDGVLVSTPQGSSGWGMSATNSLLYKDLSAIEIIFVNPIFYYLRSVVIPPKPLTLRLEDKGYPQTARAVVDGEVVTLIKTNQEITVRVSQRKAKILRFFKLDLIGEVLHAYHI</sequence>
<accession>C3MTP3</accession>
<proteinExistence type="inferred from homology"/>
<gene>
    <name evidence="1" type="primary">nadK</name>
    <name type="ordered locus">M1425_0035</name>
</gene>
<organism>
    <name type="scientific">Saccharolobus islandicus (strain M.14.25 / Kamchatka #1)</name>
    <name type="common">Sulfolobus islandicus</name>
    <dbReference type="NCBI Taxonomy" id="427317"/>
    <lineage>
        <taxon>Archaea</taxon>
        <taxon>Thermoproteota</taxon>
        <taxon>Thermoprotei</taxon>
        <taxon>Sulfolobales</taxon>
        <taxon>Sulfolobaceae</taxon>
        <taxon>Saccharolobus</taxon>
    </lineage>
</organism>
<reference key="1">
    <citation type="journal article" date="2009" name="Proc. Natl. Acad. Sci. U.S.A.">
        <title>Biogeography of the Sulfolobus islandicus pan-genome.</title>
        <authorList>
            <person name="Reno M.L."/>
            <person name="Held N.L."/>
            <person name="Fields C.J."/>
            <person name="Burke P.V."/>
            <person name="Whitaker R.J."/>
        </authorList>
    </citation>
    <scope>NUCLEOTIDE SEQUENCE [LARGE SCALE GENOMIC DNA]</scope>
    <source>
        <strain>M.14.25 / Kamchatka #1</strain>
    </source>
</reference>
<comment type="function">
    <text evidence="1">Involved in the regulation of the intracellular balance of NAD and NADP, and is a key enzyme in the biosynthesis of NADP. Catalyzes specifically the phosphorylation on 2'-hydroxyl of the adenosine moiety of NAD to yield NADP.</text>
</comment>
<comment type="catalytic activity">
    <reaction evidence="1">
        <text>NAD(+) + ATP = ADP + NADP(+) + H(+)</text>
        <dbReference type="Rhea" id="RHEA:18629"/>
        <dbReference type="ChEBI" id="CHEBI:15378"/>
        <dbReference type="ChEBI" id="CHEBI:30616"/>
        <dbReference type="ChEBI" id="CHEBI:57540"/>
        <dbReference type="ChEBI" id="CHEBI:58349"/>
        <dbReference type="ChEBI" id="CHEBI:456216"/>
        <dbReference type="EC" id="2.7.1.23"/>
    </reaction>
</comment>
<comment type="cofactor">
    <cofactor evidence="1">
        <name>a divalent metal cation</name>
        <dbReference type="ChEBI" id="CHEBI:60240"/>
    </cofactor>
</comment>
<comment type="subcellular location">
    <subcellularLocation>
        <location evidence="1">Cytoplasm</location>
    </subcellularLocation>
</comment>
<comment type="similarity">
    <text evidence="1">Belongs to the NAD kinase family.</text>
</comment>
<feature type="chain" id="PRO_1000205428" description="NAD kinase">
    <location>
        <begin position="1"/>
        <end position="249"/>
    </location>
</feature>
<feature type="active site" description="Proton acceptor" evidence="1">
    <location>
        <position position="45"/>
    </location>
</feature>
<feature type="binding site" evidence="1">
    <location>
        <begin position="45"/>
        <end position="46"/>
    </location>
    <ligand>
        <name>NAD(+)</name>
        <dbReference type="ChEBI" id="CHEBI:57540"/>
    </ligand>
</feature>
<feature type="binding site" evidence="1">
    <location>
        <position position="50"/>
    </location>
    <ligand>
        <name>NAD(+)</name>
        <dbReference type="ChEBI" id="CHEBI:57540"/>
    </ligand>
</feature>
<feature type="binding site" evidence="1">
    <location>
        <begin position="110"/>
        <end position="111"/>
    </location>
    <ligand>
        <name>NAD(+)</name>
        <dbReference type="ChEBI" id="CHEBI:57540"/>
    </ligand>
</feature>
<feature type="binding site" evidence="1">
    <location>
        <position position="138"/>
    </location>
    <ligand>
        <name>NAD(+)</name>
        <dbReference type="ChEBI" id="CHEBI:57540"/>
    </ligand>
</feature>
<feature type="binding site" evidence="1">
    <location>
        <begin position="149"/>
        <end position="154"/>
    </location>
    <ligand>
        <name>NAD(+)</name>
        <dbReference type="ChEBI" id="CHEBI:57540"/>
    </ligand>
</feature>
<evidence type="ECO:0000255" key="1">
    <source>
        <dbReference type="HAMAP-Rule" id="MF_00361"/>
    </source>
</evidence>